<gene>
    <name evidence="1" type="primary">rplC</name>
    <name type="ordered locus">BDI_2380</name>
</gene>
<sequence length="205" mass="22134">MPGLLGKKIGMTSVFSAEGKNLPCTVIEVGPCVVTQIKTLEKDGYEAVQLGFQEKKEKHTTQPEMGHFKKAGVAPQRHLAEFKNFETEYKLGDVITVDFLEDAGFVDVVGTSKGKGFQGVVKRHGFGGVGQTTHGQHNRARKPGSIGACSYPAKVFKGMRMGGQMGNERVTVQNLQVIKVMPEHNLLLVKGSVPGAKGSILLIEK</sequence>
<feature type="chain" id="PRO_1000052100" description="Large ribosomal subunit protein uL3">
    <location>
        <begin position="1"/>
        <end position="205"/>
    </location>
</feature>
<name>RL3_PARD8</name>
<accession>A6LEJ1</accession>
<dbReference type="EMBL" id="CP000140">
    <property type="protein sequence ID" value="ABR44105.1"/>
    <property type="molecule type" value="Genomic_DNA"/>
</dbReference>
<dbReference type="RefSeq" id="WP_005853963.1">
    <property type="nucleotide sequence ID" value="NZ_LR215978.1"/>
</dbReference>
<dbReference type="SMR" id="A6LEJ1"/>
<dbReference type="STRING" id="435591.BDI_2380"/>
<dbReference type="PaxDb" id="435591-BDI_2380"/>
<dbReference type="GeneID" id="93522373"/>
<dbReference type="KEGG" id="pdi:BDI_2380"/>
<dbReference type="eggNOG" id="COG0087">
    <property type="taxonomic scope" value="Bacteria"/>
</dbReference>
<dbReference type="HOGENOM" id="CLU_044142_4_1_10"/>
<dbReference type="BioCyc" id="PDIS435591:G1G5A-2445-MONOMER"/>
<dbReference type="Proteomes" id="UP000000566">
    <property type="component" value="Chromosome"/>
</dbReference>
<dbReference type="GO" id="GO:0022625">
    <property type="term" value="C:cytosolic large ribosomal subunit"/>
    <property type="evidence" value="ECO:0007669"/>
    <property type="project" value="TreeGrafter"/>
</dbReference>
<dbReference type="GO" id="GO:0019843">
    <property type="term" value="F:rRNA binding"/>
    <property type="evidence" value="ECO:0007669"/>
    <property type="project" value="UniProtKB-UniRule"/>
</dbReference>
<dbReference type="GO" id="GO:0003735">
    <property type="term" value="F:structural constituent of ribosome"/>
    <property type="evidence" value="ECO:0007669"/>
    <property type="project" value="InterPro"/>
</dbReference>
<dbReference type="GO" id="GO:0006412">
    <property type="term" value="P:translation"/>
    <property type="evidence" value="ECO:0007669"/>
    <property type="project" value="UniProtKB-UniRule"/>
</dbReference>
<dbReference type="FunFam" id="2.40.30.10:FF:000047">
    <property type="entry name" value="50S ribosomal protein L3"/>
    <property type="match status" value="1"/>
</dbReference>
<dbReference type="FunFam" id="3.30.160.810:FF:000001">
    <property type="entry name" value="50S ribosomal protein L3"/>
    <property type="match status" value="1"/>
</dbReference>
<dbReference type="Gene3D" id="3.30.160.810">
    <property type="match status" value="1"/>
</dbReference>
<dbReference type="Gene3D" id="2.40.30.10">
    <property type="entry name" value="Translation factors"/>
    <property type="match status" value="1"/>
</dbReference>
<dbReference type="HAMAP" id="MF_01325_B">
    <property type="entry name" value="Ribosomal_uL3_B"/>
    <property type="match status" value="1"/>
</dbReference>
<dbReference type="InterPro" id="IPR000597">
    <property type="entry name" value="Ribosomal_uL3"/>
</dbReference>
<dbReference type="InterPro" id="IPR019927">
    <property type="entry name" value="Ribosomal_uL3_bac/org-type"/>
</dbReference>
<dbReference type="InterPro" id="IPR019926">
    <property type="entry name" value="Ribosomal_uL3_CS"/>
</dbReference>
<dbReference type="InterPro" id="IPR009000">
    <property type="entry name" value="Transl_B-barrel_sf"/>
</dbReference>
<dbReference type="NCBIfam" id="TIGR03625">
    <property type="entry name" value="L3_bact"/>
    <property type="match status" value="1"/>
</dbReference>
<dbReference type="PANTHER" id="PTHR11229">
    <property type="entry name" value="50S RIBOSOMAL PROTEIN L3"/>
    <property type="match status" value="1"/>
</dbReference>
<dbReference type="PANTHER" id="PTHR11229:SF16">
    <property type="entry name" value="LARGE RIBOSOMAL SUBUNIT PROTEIN UL3C"/>
    <property type="match status" value="1"/>
</dbReference>
<dbReference type="Pfam" id="PF00297">
    <property type="entry name" value="Ribosomal_L3"/>
    <property type="match status" value="1"/>
</dbReference>
<dbReference type="SUPFAM" id="SSF50447">
    <property type="entry name" value="Translation proteins"/>
    <property type="match status" value="1"/>
</dbReference>
<dbReference type="PROSITE" id="PS00474">
    <property type="entry name" value="RIBOSOMAL_L3"/>
    <property type="match status" value="1"/>
</dbReference>
<proteinExistence type="inferred from homology"/>
<comment type="function">
    <text evidence="1">One of the primary rRNA binding proteins, it binds directly near the 3'-end of the 23S rRNA, where it nucleates assembly of the 50S subunit.</text>
</comment>
<comment type="subunit">
    <text evidence="1">Part of the 50S ribosomal subunit. Forms a cluster with proteins L14 and L19.</text>
</comment>
<comment type="similarity">
    <text evidence="1">Belongs to the universal ribosomal protein uL3 family.</text>
</comment>
<keyword id="KW-1185">Reference proteome</keyword>
<keyword id="KW-0687">Ribonucleoprotein</keyword>
<keyword id="KW-0689">Ribosomal protein</keyword>
<keyword id="KW-0694">RNA-binding</keyword>
<keyword id="KW-0699">rRNA-binding</keyword>
<reference key="1">
    <citation type="journal article" date="2007" name="PLoS Biol.">
        <title>Evolution of symbiotic bacteria in the distal human intestine.</title>
        <authorList>
            <person name="Xu J."/>
            <person name="Mahowald M.A."/>
            <person name="Ley R.E."/>
            <person name="Lozupone C.A."/>
            <person name="Hamady M."/>
            <person name="Martens E.C."/>
            <person name="Henrissat B."/>
            <person name="Coutinho P.M."/>
            <person name="Minx P."/>
            <person name="Latreille P."/>
            <person name="Cordum H."/>
            <person name="Van Brunt A."/>
            <person name="Kim K."/>
            <person name="Fulton R.S."/>
            <person name="Fulton L.A."/>
            <person name="Clifton S.W."/>
            <person name="Wilson R.K."/>
            <person name="Knight R.D."/>
            <person name="Gordon J.I."/>
        </authorList>
    </citation>
    <scope>NUCLEOTIDE SEQUENCE [LARGE SCALE GENOMIC DNA]</scope>
    <source>
        <strain>ATCC 8503 / DSM 20701 / CIP 104284 / JCM 5825 / NCTC 11152</strain>
    </source>
</reference>
<protein>
    <recommendedName>
        <fullName evidence="1">Large ribosomal subunit protein uL3</fullName>
    </recommendedName>
    <alternativeName>
        <fullName evidence="2">50S ribosomal protein L3</fullName>
    </alternativeName>
</protein>
<organism>
    <name type="scientific">Parabacteroides distasonis (strain ATCC 8503 / DSM 20701 / CIP 104284 / JCM 5825 / NCTC 11152)</name>
    <dbReference type="NCBI Taxonomy" id="435591"/>
    <lineage>
        <taxon>Bacteria</taxon>
        <taxon>Pseudomonadati</taxon>
        <taxon>Bacteroidota</taxon>
        <taxon>Bacteroidia</taxon>
        <taxon>Bacteroidales</taxon>
        <taxon>Tannerellaceae</taxon>
        <taxon>Parabacteroides</taxon>
    </lineage>
</organism>
<evidence type="ECO:0000255" key="1">
    <source>
        <dbReference type="HAMAP-Rule" id="MF_01325"/>
    </source>
</evidence>
<evidence type="ECO:0000305" key="2"/>